<sequence>MFANVGWGEMLVLVIAGLVILGPERLPGAIRWTAGAVRQARDYITGATSQLREDLGPEFDDLREPLSELQKLRGMTPRAALTKHLLDGDDSIFTGRFDSTSSDQPGSGKPPKPQSGPGPAAASGPAATTTPASTPFDPDAT</sequence>
<keyword id="KW-1003">Cell membrane</keyword>
<keyword id="KW-0472">Membrane</keyword>
<keyword id="KW-0653">Protein transport</keyword>
<keyword id="KW-0811">Translocation</keyword>
<keyword id="KW-0812">Transmembrane</keyword>
<keyword id="KW-1133">Transmembrane helix</keyword>
<keyword id="KW-0813">Transport</keyword>
<comment type="function">
    <text evidence="1">Part of the twin-arginine translocation (Tat) system that transports large folded proteins containing a characteristic twin-arginine motif in their signal peptide across membranes. Together with TatC, TatB is part of a receptor directly interacting with Tat signal peptides. TatB may form an oligomeric binding site that transiently accommodates folded Tat precursor proteins before their translocation.</text>
</comment>
<comment type="subunit">
    <text evidence="1">The Tat system comprises two distinct complexes: a TatABC complex, containing multiple copies of TatA, TatB and TatC subunits, and a separate TatA complex, containing only TatA subunits. Substrates initially bind to the TatABC complex, which probably triggers association of the separate TatA complex to form the active translocon.</text>
</comment>
<comment type="subcellular location">
    <subcellularLocation>
        <location evidence="1">Cell membrane</location>
        <topology evidence="1">Single-pass membrane protein</topology>
    </subcellularLocation>
</comment>
<comment type="similarity">
    <text evidence="1">Belongs to the TatB family.</text>
</comment>
<accession>A4T8W2</accession>
<protein>
    <recommendedName>
        <fullName evidence="1">Sec-independent protein translocase protein TatB</fullName>
    </recommendedName>
</protein>
<name>TATB_MYCGI</name>
<proteinExistence type="inferred from homology"/>
<organism>
    <name type="scientific">Mycolicibacterium gilvum (strain PYR-GCK)</name>
    <name type="common">Mycobacterium gilvum (strain PYR-GCK)</name>
    <dbReference type="NCBI Taxonomy" id="350054"/>
    <lineage>
        <taxon>Bacteria</taxon>
        <taxon>Bacillati</taxon>
        <taxon>Actinomycetota</taxon>
        <taxon>Actinomycetes</taxon>
        <taxon>Mycobacteriales</taxon>
        <taxon>Mycobacteriaceae</taxon>
        <taxon>Mycolicibacterium</taxon>
    </lineage>
</organism>
<reference key="1">
    <citation type="submission" date="2007-04" db="EMBL/GenBank/DDBJ databases">
        <title>Complete sequence of chromosome of Mycobacterium gilvum PYR-GCK.</title>
        <authorList>
            <consortium name="US DOE Joint Genome Institute"/>
            <person name="Copeland A."/>
            <person name="Lucas S."/>
            <person name="Lapidus A."/>
            <person name="Barry K."/>
            <person name="Detter J.C."/>
            <person name="Glavina del Rio T."/>
            <person name="Hammon N."/>
            <person name="Israni S."/>
            <person name="Dalin E."/>
            <person name="Tice H."/>
            <person name="Pitluck S."/>
            <person name="Chain P."/>
            <person name="Malfatti S."/>
            <person name="Shin M."/>
            <person name="Vergez L."/>
            <person name="Schmutz J."/>
            <person name="Larimer F."/>
            <person name="Land M."/>
            <person name="Hauser L."/>
            <person name="Kyrpides N."/>
            <person name="Mikhailova N."/>
            <person name="Miller C."/>
            <person name="Richardson P."/>
        </authorList>
    </citation>
    <scope>NUCLEOTIDE SEQUENCE [LARGE SCALE GENOMIC DNA]</scope>
    <source>
        <strain>PYR-GCK</strain>
    </source>
</reference>
<evidence type="ECO:0000255" key="1">
    <source>
        <dbReference type="HAMAP-Rule" id="MF_00237"/>
    </source>
</evidence>
<evidence type="ECO:0000256" key="2">
    <source>
        <dbReference type="SAM" id="MobiDB-lite"/>
    </source>
</evidence>
<feature type="chain" id="PRO_1000078324" description="Sec-independent protein translocase protein TatB">
    <location>
        <begin position="1"/>
        <end position="141"/>
    </location>
</feature>
<feature type="transmembrane region" description="Helical" evidence="1">
    <location>
        <begin position="2"/>
        <end position="22"/>
    </location>
</feature>
<feature type="region of interest" description="Disordered" evidence="2">
    <location>
        <begin position="92"/>
        <end position="141"/>
    </location>
</feature>
<feature type="compositionally biased region" description="Low complexity" evidence="2">
    <location>
        <begin position="117"/>
        <end position="141"/>
    </location>
</feature>
<dbReference type="EMBL" id="CP000656">
    <property type="protein sequence ID" value="ABP44681.1"/>
    <property type="molecule type" value="Genomic_DNA"/>
</dbReference>
<dbReference type="SMR" id="A4T8W2"/>
<dbReference type="STRING" id="350054.Mflv_2203"/>
<dbReference type="KEGG" id="mgi:Mflv_2203"/>
<dbReference type="eggNOG" id="COG1826">
    <property type="taxonomic scope" value="Bacteria"/>
</dbReference>
<dbReference type="HOGENOM" id="CLU_086034_2_0_11"/>
<dbReference type="OrthoDB" id="3267321at2"/>
<dbReference type="GO" id="GO:0033281">
    <property type="term" value="C:TAT protein transport complex"/>
    <property type="evidence" value="ECO:0007669"/>
    <property type="project" value="UniProtKB-UniRule"/>
</dbReference>
<dbReference type="GO" id="GO:0008320">
    <property type="term" value="F:protein transmembrane transporter activity"/>
    <property type="evidence" value="ECO:0007669"/>
    <property type="project" value="UniProtKB-UniRule"/>
</dbReference>
<dbReference type="GO" id="GO:0043953">
    <property type="term" value="P:protein transport by the Tat complex"/>
    <property type="evidence" value="ECO:0007669"/>
    <property type="project" value="UniProtKB-UniRule"/>
</dbReference>
<dbReference type="Gene3D" id="1.20.5.3310">
    <property type="match status" value="1"/>
</dbReference>
<dbReference type="HAMAP" id="MF_00237">
    <property type="entry name" value="TatB"/>
    <property type="match status" value="1"/>
</dbReference>
<dbReference type="InterPro" id="IPR018448">
    <property type="entry name" value="TatB"/>
</dbReference>
<dbReference type="NCBIfam" id="TIGR01410">
    <property type="entry name" value="tatB"/>
    <property type="match status" value="1"/>
</dbReference>
<dbReference type="PRINTS" id="PR01506">
    <property type="entry name" value="TATBPROTEIN"/>
</dbReference>
<gene>
    <name evidence="1" type="primary">tatB</name>
    <name type="ordered locus">Mflv_2203</name>
</gene>